<accession>C1CK50</accession>
<dbReference type="EMBL" id="CP000920">
    <property type="protein sequence ID" value="ACO21089.1"/>
    <property type="molecule type" value="Genomic_DNA"/>
</dbReference>
<dbReference type="RefSeq" id="WP_000143265.1">
    <property type="nucleotide sequence ID" value="NC_012467.1"/>
</dbReference>
<dbReference type="SMR" id="C1CK50"/>
<dbReference type="GeneID" id="45653689"/>
<dbReference type="KEGG" id="spp:SPP_0975"/>
<dbReference type="HOGENOM" id="CLU_038009_1_0_9"/>
<dbReference type="GO" id="GO:0005829">
    <property type="term" value="C:cytosol"/>
    <property type="evidence" value="ECO:0007669"/>
    <property type="project" value="TreeGrafter"/>
</dbReference>
<dbReference type="GO" id="GO:0005886">
    <property type="term" value="C:plasma membrane"/>
    <property type="evidence" value="ECO:0007669"/>
    <property type="project" value="UniProtKB-SubCell"/>
</dbReference>
<dbReference type="GO" id="GO:0005525">
    <property type="term" value="F:GTP binding"/>
    <property type="evidence" value="ECO:0007669"/>
    <property type="project" value="UniProtKB-UniRule"/>
</dbReference>
<dbReference type="GO" id="GO:0003924">
    <property type="term" value="F:GTPase activity"/>
    <property type="evidence" value="ECO:0007669"/>
    <property type="project" value="UniProtKB-UniRule"/>
</dbReference>
<dbReference type="GO" id="GO:0043024">
    <property type="term" value="F:ribosomal small subunit binding"/>
    <property type="evidence" value="ECO:0007669"/>
    <property type="project" value="TreeGrafter"/>
</dbReference>
<dbReference type="GO" id="GO:0070181">
    <property type="term" value="F:small ribosomal subunit rRNA binding"/>
    <property type="evidence" value="ECO:0007669"/>
    <property type="project" value="UniProtKB-UniRule"/>
</dbReference>
<dbReference type="GO" id="GO:0000028">
    <property type="term" value="P:ribosomal small subunit assembly"/>
    <property type="evidence" value="ECO:0007669"/>
    <property type="project" value="TreeGrafter"/>
</dbReference>
<dbReference type="CDD" id="cd04163">
    <property type="entry name" value="Era"/>
    <property type="match status" value="1"/>
</dbReference>
<dbReference type="CDD" id="cd22534">
    <property type="entry name" value="KH-II_Era"/>
    <property type="match status" value="1"/>
</dbReference>
<dbReference type="FunFam" id="3.30.300.20:FF:000003">
    <property type="entry name" value="GTPase Era"/>
    <property type="match status" value="1"/>
</dbReference>
<dbReference type="FunFam" id="3.40.50.300:FF:000094">
    <property type="entry name" value="GTPase Era"/>
    <property type="match status" value="1"/>
</dbReference>
<dbReference type="Gene3D" id="3.30.300.20">
    <property type="match status" value="1"/>
</dbReference>
<dbReference type="Gene3D" id="3.40.50.300">
    <property type="entry name" value="P-loop containing nucleotide triphosphate hydrolases"/>
    <property type="match status" value="1"/>
</dbReference>
<dbReference type="HAMAP" id="MF_00367">
    <property type="entry name" value="GTPase_Era"/>
    <property type="match status" value="1"/>
</dbReference>
<dbReference type="InterPro" id="IPR030388">
    <property type="entry name" value="G_ERA_dom"/>
</dbReference>
<dbReference type="InterPro" id="IPR006073">
    <property type="entry name" value="GTP-bd"/>
</dbReference>
<dbReference type="InterPro" id="IPR005662">
    <property type="entry name" value="GTPase_Era-like"/>
</dbReference>
<dbReference type="InterPro" id="IPR015946">
    <property type="entry name" value="KH_dom-like_a/b"/>
</dbReference>
<dbReference type="InterPro" id="IPR004044">
    <property type="entry name" value="KH_dom_type_2"/>
</dbReference>
<dbReference type="InterPro" id="IPR009019">
    <property type="entry name" value="KH_sf_prok-type"/>
</dbReference>
<dbReference type="InterPro" id="IPR027417">
    <property type="entry name" value="P-loop_NTPase"/>
</dbReference>
<dbReference type="InterPro" id="IPR005225">
    <property type="entry name" value="Small_GTP-bd"/>
</dbReference>
<dbReference type="NCBIfam" id="TIGR00436">
    <property type="entry name" value="era"/>
    <property type="match status" value="1"/>
</dbReference>
<dbReference type="NCBIfam" id="NF000908">
    <property type="entry name" value="PRK00089.1"/>
    <property type="match status" value="1"/>
</dbReference>
<dbReference type="NCBIfam" id="TIGR00231">
    <property type="entry name" value="small_GTP"/>
    <property type="match status" value="1"/>
</dbReference>
<dbReference type="PANTHER" id="PTHR42698">
    <property type="entry name" value="GTPASE ERA"/>
    <property type="match status" value="1"/>
</dbReference>
<dbReference type="PANTHER" id="PTHR42698:SF1">
    <property type="entry name" value="GTPASE ERA, MITOCHONDRIAL"/>
    <property type="match status" value="1"/>
</dbReference>
<dbReference type="Pfam" id="PF07650">
    <property type="entry name" value="KH_2"/>
    <property type="match status" value="1"/>
</dbReference>
<dbReference type="Pfam" id="PF01926">
    <property type="entry name" value="MMR_HSR1"/>
    <property type="match status" value="1"/>
</dbReference>
<dbReference type="SUPFAM" id="SSF52540">
    <property type="entry name" value="P-loop containing nucleoside triphosphate hydrolases"/>
    <property type="match status" value="1"/>
</dbReference>
<dbReference type="SUPFAM" id="SSF54814">
    <property type="entry name" value="Prokaryotic type KH domain (KH-domain type II)"/>
    <property type="match status" value="1"/>
</dbReference>
<dbReference type="PROSITE" id="PS51713">
    <property type="entry name" value="G_ERA"/>
    <property type="match status" value="1"/>
</dbReference>
<dbReference type="PROSITE" id="PS50823">
    <property type="entry name" value="KH_TYPE_2"/>
    <property type="match status" value="1"/>
</dbReference>
<organism>
    <name type="scientific">Streptococcus pneumoniae (strain P1031)</name>
    <dbReference type="NCBI Taxonomy" id="488223"/>
    <lineage>
        <taxon>Bacteria</taxon>
        <taxon>Bacillati</taxon>
        <taxon>Bacillota</taxon>
        <taxon>Bacilli</taxon>
        <taxon>Lactobacillales</taxon>
        <taxon>Streptococcaceae</taxon>
        <taxon>Streptococcus</taxon>
    </lineage>
</organism>
<sequence>MTFKSGFVAILGRPNVGKSTFLNHVMGQKIAIMSDKAQTTRNKIMGIYTTDKEQIVFIDTPGIHKPKTALGDFMVESAYSTLREVDTVLFMVPADEARGKGDDMIIERLKAAKVPVILVVNKIDKVHPDQLLSQIDDFRNQMDFKEIVPISALQGNNVSRLVDILSENLDEGFQYFPSDQITDHPERFLVSEMVREKVLHLTREEIPHSVAVVVDSMKRDEETDKVHIRATIMVERDSQKGIIIGKGGAMLKKIGSMARRDIELMLGDKVFLETWVKVKKNWRDKKLDLADFGYNEREY</sequence>
<feature type="chain" id="PRO_1000189975" description="GTPase Era">
    <location>
        <begin position="1"/>
        <end position="299"/>
    </location>
</feature>
<feature type="domain" description="Era-type G" evidence="2">
    <location>
        <begin position="4"/>
        <end position="171"/>
    </location>
</feature>
<feature type="domain" description="KH type-2" evidence="1">
    <location>
        <begin position="202"/>
        <end position="280"/>
    </location>
</feature>
<feature type="region of interest" description="G1" evidence="2">
    <location>
        <begin position="12"/>
        <end position="19"/>
    </location>
</feature>
<feature type="region of interest" description="G2" evidence="2">
    <location>
        <begin position="38"/>
        <end position="42"/>
    </location>
</feature>
<feature type="region of interest" description="G3" evidence="2">
    <location>
        <begin position="59"/>
        <end position="62"/>
    </location>
</feature>
<feature type="region of interest" description="G4" evidence="2">
    <location>
        <begin position="121"/>
        <end position="124"/>
    </location>
</feature>
<feature type="region of interest" description="G5" evidence="2">
    <location>
        <begin position="150"/>
        <end position="152"/>
    </location>
</feature>
<feature type="binding site" evidence="1">
    <location>
        <begin position="12"/>
        <end position="19"/>
    </location>
    <ligand>
        <name>GTP</name>
        <dbReference type="ChEBI" id="CHEBI:37565"/>
    </ligand>
</feature>
<feature type="binding site" evidence="1">
    <location>
        <begin position="59"/>
        <end position="63"/>
    </location>
    <ligand>
        <name>GTP</name>
        <dbReference type="ChEBI" id="CHEBI:37565"/>
    </ligand>
</feature>
<feature type="binding site" evidence="1">
    <location>
        <begin position="121"/>
        <end position="124"/>
    </location>
    <ligand>
        <name>GTP</name>
        <dbReference type="ChEBI" id="CHEBI:37565"/>
    </ligand>
</feature>
<reference key="1">
    <citation type="journal article" date="2010" name="Genome Biol.">
        <title>Structure and dynamics of the pan-genome of Streptococcus pneumoniae and closely related species.</title>
        <authorList>
            <person name="Donati C."/>
            <person name="Hiller N.L."/>
            <person name="Tettelin H."/>
            <person name="Muzzi A."/>
            <person name="Croucher N.J."/>
            <person name="Angiuoli S.V."/>
            <person name="Oggioni M."/>
            <person name="Dunning Hotopp J.C."/>
            <person name="Hu F.Z."/>
            <person name="Riley D.R."/>
            <person name="Covacci A."/>
            <person name="Mitchell T.J."/>
            <person name="Bentley S.D."/>
            <person name="Kilian M."/>
            <person name="Ehrlich G.D."/>
            <person name="Rappuoli R."/>
            <person name="Moxon E.R."/>
            <person name="Masignani V."/>
        </authorList>
    </citation>
    <scope>NUCLEOTIDE SEQUENCE [LARGE SCALE GENOMIC DNA]</scope>
    <source>
        <strain>P1031</strain>
    </source>
</reference>
<comment type="function">
    <text evidence="1">An essential GTPase that binds both GDP and GTP, with rapid nucleotide exchange. Plays a role in 16S rRNA processing and 30S ribosomal subunit biogenesis and possibly also in cell cycle regulation and energy metabolism.</text>
</comment>
<comment type="subunit">
    <text evidence="1">Monomer.</text>
</comment>
<comment type="subcellular location">
    <subcellularLocation>
        <location>Cytoplasm</location>
    </subcellularLocation>
    <subcellularLocation>
        <location evidence="1">Cell membrane</location>
        <topology evidence="1">Peripheral membrane protein</topology>
    </subcellularLocation>
</comment>
<comment type="similarity">
    <text evidence="1 2">Belongs to the TRAFAC class TrmE-Era-EngA-EngB-Septin-like GTPase superfamily. Era GTPase family.</text>
</comment>
<name>ERA_STRZP</name>
<protein>
    <recommendedName>
        <fullName evidence="1">GTPase Era</fullName>
    </recommendedName>
</protein>
<proteinExistence type="inferred from homology"/>
<keyword id="KW-1003">Cell membrane</keyword>
<keyword id="KW-0963">Cytoplasm</keyword>
<keyword id="KW-0342">GTP-binding</keyword>
<keyword id="KW-0472">Membrane</keyword>
<keyword id="KW-0547">Nucleotide-binding</keyword>
<keyword id="KW-0690">Ribosome biogenesis</keyword>
<keyword id="KW-0694">RNA-binding</keyword>
<keyword id="KW-0699">rRNA-binding</keyword>
<gene>
    <name evidence="1" type="primary">era</name>
    <name type="ordered locus">SPP_0975</name>
</gene>
<evidence type="ECO:0000255" key="1">
    <source>
        <dbReference type="HAMAP-Rule" id="MF_00367"/>
    </source>
</evidence>
<evidence type="ECO:0000255" key="2">
    <source>
        <dbReference type="PROSITE-ProRule" id="PRU01050"/>
    </source>
</evidence>